<gene>
    <name evidence="1" type="primary">hutG</name>
    <name type="ordered locus">Bsph_3234</name>
</gene>
<feature type="chain" id="PRO_1000133003" description="Formimidoylglutamase">
    <location>
        <begin position="1"/>
        <end position="322"/>
    </location>
</feature>
<feature type="binding site" evidence="1">
    <location>
        <position position="130"/>
    </location>
    <ligand>
        <name>Mn(2+)</name>
        <dbReference type="ChEBI" id="CHEBI:29035"/>
        <label>1</label>
    </ligand>
</feature>
<feature type="binding site" evidence="1">
    <location>
        <position position="156"/>
    </location>
    <ligand>
        <name>Mn(2+)</name>
        <dbReference type="ChEBI" id="CHEBI:29035"/>
        <label>1</label>
    </ligand>
</feature>
<feature type="binding site" evidence="1">
    <location>
        <position position="156"/>
    </location>
    <ligand>
        <name>Mn(2+)</name>
        <dbReference type="ChEBI" id="CHEBI:29035"/>
        <label>2</label>
    </ligand>
</feature>
<feature type="binding site" evidence="1">
    <location>
        <position position="158"/>
    </location>
    <ligand>
        <name>Mn(2+)</name>
        <dbReference type="ChEBI" id="CHEBI:29035"/>
        <label>2</label>
    </ligand>
</feature>
<feature type="binding site" evidence="1">
    <location>
        <position position="160"/>
    </location>
    <ligand>
        <name>Mn(2+)</name>
        <dbReference type="ChEBI" id="CHEBI:29035"/>
        <label>1</label>
    </ligand>
</feature>
<feature type="binding site" evidence="1">
    <location>
        <position position="245"/>
    </location>
    <ligand>
        <name>Mn(2+)</name>
        <dbReference type="ChEBI" id="CHEBI:29035"/>
        <label>1</label>
    </ligand>
</feature>
<feature type="binding site" evidence="1">
    <location>
        <position position="245"/>
    </location>
    <ligand>
        <name>Mn(2+)</name>
        <dbReference type="ChEBI" id="CHEBI:29035"/>
        <label>2</label>
    </ligand>
</feature>
<feature type="binding site" evidence="1">
    <location>
        <position position="247"/>
    </location>
    <ligand>
        <name>Mn(2+)</name>
        <dbReference type="ChEBI" id="CHEBI:29035"/>
        <label>2</label>
    </ligand>
</feature>
<accession>B1HQK2</accession>
<proteinExistence type="inferred from homology"/>
<sequence>MYTMTDQKQWKGRIDSTTNRSSFRLHQQVKRIAMNDVSASDKKGAAIIGFICDEGVRRNQGRVGAANGPNALREGLSSLPWTFEEEQQIIDVGNIICLNHALEEAQRELGDVVSTLLQKKLQCVVLGGGHETLYGHYLGVRAAIPKDAKIGIIKIDAHIDLRPYDEQPSSGTMFRQILEQDPHVDYFVVGIQRYGYTKELFEKADELQVKYVIEDDMTSAANIQPLMDDLQHYMDQHDYVLLTLCMDVLNAAAAPGVSAPSPFGLEPTTVRTILQKVTSHPHTHSFDICEVNPSLDENGRTVKLGAYFVYEALNNLLGGQGL</sequence>
<reference key="1">
    <citation type="journal article" date="2008" name="J. Bacteriol.">
        <title>Complete genome sequence of the mosquitocidal bacterium Bacillus sphaericus C3-41 and comparison with those of closely related Bacillus species.</title>
        <authorList>
            <person name="Hu X."/>
            <person name="Fan W."/>
            <person name="Han B."/>
            <person name="Liu H."/>
            <person name="Zheng D."/>
            <person name="Li Q."/>
            <person name="Dong W."/>
            <person name="Yan J."/>
            <person name="Gao M."/>
            <person name="Berry C."/>
            <person name="Yuan Z."/>
        </authorList>
    </citation>
    <scope>NUCLEOTIDE SEQUENCE [LARGE SCALE GENOMIC DNA]</scope>
    <source>
        <strain>C3-41</strain>
    </source>
</reference>
<organism>
    <name type="scientific">Lysinibacillus sphaericus (strain C3-41)</name>
    <dbReference type="NCBI Taxonomy" id="444177"/>
    <lineage>
        <taxon>Bacteria</taxon>
        <taxon>Bacillati</taxon>
        <taxon>Bacillota</taxon>
        <taxon>Bacilli</taxon>
        <taxon>Bacillales</taxon>
        <taxon>Bacillaceae</taxon>
        <taxon>Lysinibacillus</taxon>
    </lineage>
</organism>
<protein>
    <recommendedName>
        <fullName evidence="1">Formimidoylglutamase</fullName>
        <ecNumber evidence="1">3.5.3.8</ecNumber>
    </recommendedName>
    <alternativeName>
        <fullName evidence="1">Formiminoglutamase</fullName>
    </alternativeName>
    <alternativeName>
        <fullName evidence="1">Formiminoglutamate hydrolase</fullName>
    </alternativeName>
</protein>
<evidence type="ECO:0000255" key="1">
    <source>
        <dbReference type="HAMAP-Rule" id="MF_00737"/>
    </source>
</evidence>
<name>HUTG_LYSSC</name>
<comment type="function">
    <text evidence="1">Catalyzes the conversion of N-formimidoyl-L-glutamate to L-glutamate and formamide.</text>
</comment>
<comment type="catalytic activity">
    <reaction evidence="1">
        <text>N-formimidoyl-L-glutamate + H2O = formamide + L-glutamate</text>
        <dbReference type="Rhea" id="RHEA:22492"/>
        <dbReference type="ChEBI" id="CHEBI:15377"/>
        <dbReference type="ChEBI" id="CHEBI:16397"/>
        <dbReference type="ChEBI" id="CHEBI:29985"/>
        <dbReference type="ChEBI" id="CHEBI:58928"/>
        <dbReference type="EC" id="3.5.3.8"/>
    </reaction>
</comment>
<comment type="cofactor">
    <cofactor evidence="1">
        <name>Mn(2+)</name>
        <dbReference type="ChEBI" id="CHEBI:29035"/>
    </cofactor>
    <text evidence="1">Binds 2 manganese ions per subunit.</text>
</comment>
<comment type="pathway">
    <text evidence="1">Amino-acid degradation; L-histidine degradation into L-glutamate; L-glutamate from N-formimidoyl-L-glutamate (hydrolase route): step 1/1.</text>
</comment>
<comment type="similarity">
    <text evidence="1">Belongs to the arginase family.</text>
</comment>
<dbReference type="EC" id="3.5.3.8" evidence="1"/>
<dbReference type="EMBL" id="CP000817">
    <property type="protein sequence ID" value="ACA40739.1"/>
    <property type="molecule type" value="Genomic_DNA"/>
</dbReference>
<dbReference type="RefSeq" id="WP_012294803.1">
    <property type="nucleotide sequence ID" value="NC_010382.1"/>
</dbReference>
<dbReference type="SMR" id="B1HQK2"/>
<dbReference type="EnsemblBacteria" id="ACA40739">
    <property type="protein sequence ID" value="ACA40739"/>
    <property type="gene ID" value="Bsph_3234"/>
</dbReference>
<dbReference type="KEGG" id="lsp:Bsph_3234"/>
<dbReference type="HOGENOM" id="CLU_039478_2_0_9"/>
<dbReference type="UniPathway" id="UPA00379">
    <property type="reaction ID" value="UER00552"/>
</dbReference>
<dbReference type="Proteomes" id="UP000002164">
    <property type="component" value="Chromosome"/>
</dbReference>
<dbReference type="GO" id="GO:0008783">
    <property type="term" value="F:agmatinase activity"/>
    <property type="evidence" value="ECO:0007669"/>
    <property type="project" value="TreeGrafter"/>
</dbReference>
<dbReference type="GO" id="GO:0050415">
    <property type="term" value="F:formimidoylglutamase activity"/>
    <property type="evidence" value="ECO:0007669"/>
    <property type="project" value="UniProtKB-UniRule"/>
</dbReference>
<dbReference type="GO" id="GO:0030145">
    <property type="term" value="F:manganese ion binding"/>
    <property type="evidence" value="ECO:0007669"/>
    <property type="project" value="UniProtKB-UniRule"/>
</dbReference>
<dbReference type="GO" id="GO:0019556">
    <property type="term" value="P:L-histidine catabolic process to glutamate and formamide"/>
    <property type="evidence" value="ECO:0007669"/>
    <property type="project" value="UniProtKB-UniPathway"/>
</dbReference>
<dbReference type="GO" id="GO:0019557">
    <property type="term" value="P:L-histidine catabolic process to glutamate and formate"/>
    <property type="evidence" value="ECO:0007669"/>
    <property type="project" value="UniProtKB-UniPathway"/>
</dbReference>
<dbReference type="GO" id="GO:0033389">
    <property type="term" value="P:putrescine biosynthetic process from arginine, via agmatine"/>
    <property type="evidence" value="ECO:0007669"/>
    <property type="project" value="TreeGrafter"/>
</dbReference>
<dbReference type="CDD" id="cd09988">
    <property type="entry name" value="Formimidoylglutamase"/>
    <property type="match status" value="1"/>
</dbReference>
<dbReference type="Gene3D" id="3.40.800.10">
    <property type="entry name" value="Ureohydrolase domain"/>
    <property type="match status" value="1"/>
</dbReference>
<dbReference type="HAMAP" id="MF_00737">
    <property type="entry name" value="Formimidoylglutam"/>
    <property type="match status" value="1"/>
</dbReference>
<dbReference type="InterPro" id="IPR005923">
    <property type="entry name" value="HutG"/>
</dbReference>
<dbReference type="InterPro" id="IPR006035">
    <property type="entry name" value="Ureohydrolase"/>
</dbReference>
<dbReference type="InterPro" id="IPR023696">
    <property type="entry name" value="Ureohydrolase_dom_sf"/>
</dbReference>
<dbReference type="NCBIfam" id="TIGR01227">
    <property type="entry name" value="hutG"/>
    <property type="match status" value="1"/>
</dbReference>
<dbReference type="PANTHER" id="PTHR11358">
    <property type="entry name" value="ARGINASE/AGMATINASE"/>
    <property type="match status" value="1"/>
</dbReference>
<dbReference type="PANTHER" id="PTHR11358:SF35">
    <property type="entry name" value="FORMIMIDOYLGLUTAMASE"/>
    <property type="match status" value="1"/>
</dbReference>
<dbReference type="Pfam" id="PF00491">
    <property type="entry name" value="Arginase"/>
    <property type="match status" value="1"/>
</dbReference>
<dbReference type="PIRSF" id="PIRSF036979">
    <property type="entry name" value="Arginase"/>
    <property type="match status" value="1"/>
</dbReference>
<dbReference type="SUPFAM" id="SSF52768">
    <property type="entry name" value="Arginase/deacetylase"/>
    <property type="match status" value="1"/>
</dbReference>
<dbReference type="PROSITE" id="PS51409">
    <property type="entry name" value="ARGINASE_2"/>
    <property type="match status" value="1"/>
</dbReference>
<keyword id="KW-0369">Histidine metabolism</keyword>
<keyword id="KW-0378">Hydrolase</keyword>
<keyword id="KW-0464">Manganese</keyword>
<keyword id="KW-0479">Metal-binding</keyword>